<gene>
    <name evidence="1" type="primary">cysS</name>
    <name type="ordered locus">BamMC406_1983</name>
</gene>
<accession>B1YSM8</accession>
<reference key="1">
    <citation type="submission" date="2008-04" db="EMBL/GenBank/DDBJ databases">
        <title>Complete sequence of chromosome 1 of Burkholderia ambifaria MC40-6.</title>
        <authorList>
            <person name="Copeland A."/>
            <person name="Lucas S."/>
            <person name="Lapidus A."/>
            <person name="Glavina del Rio T."/>
            <person name="Dalin E."/>
            <person name="Tice H."/>
            <person name="Pitluck S."/>
            <person name="Chain P."/>
            <person name="Malfatti S."/>
            <person name="Shin M."/>
            <person name="Vergez L."/>
            <person name="Lang D."/>
            <person name="Schmutz J."/>
            <person name="Larimer F."/>
            <person name="Land M."/>
            <person name="Hauser L."/>
            <person name="Kyrpides N."/>
            <person name="Lykidis A."/>
            <person name="Ramette A."/>
            <person name="Konstantinidis K."/>
            <person name="Tiedje J."/>
            <person name="Richardson P."/>
        </authorList>
    </citation>
    <scope>NUCLEOTIDE SEQUENCE [LARGE SCALE GENOMIC DNA]</scope>
    <source>
        <strain>MC40-6</strain>
    </source>
</reference>
<protein>
    <recommendedName>
        <fullName evidence="1">Cysteine--tRNA ligase</fullName>
        <ecNumber evidence="1">6.1.1.16</ecNumber>
    </recommendedName>
    <alternativeName>
        <fullName evidence="1">Cysteinyl-tRNA synthetase</fullName>
        <shortName evidence="1">CysRS</shortName>
    </alternativeName>
</protein>
<keyword id="KW-0030">Aminoacyl-tRNA synthetase</keyword>
<keyword id="KW-0067">ATP-binding</keyword>
<keyword id="KW-0963">Cytoplasm</keyword>
<keyword id="KW-0436">Ligase</keyword>
<keyword id="KW-0479">Metal-binding</keyword>
<keyword id="KW-0547">Nucleotide-binding</keyword>
<keyword id="KW-0648">Protein biosynthesis</keyword>
<keyword id="KW-0862">Zinc</keyword>
<dbReference type="EC" id="6.1.1.16" evidence="1"/>
<dbReference type="EMBL" id="CP001025">
    <property type="protein sequence ID" value="ACB64464.1"/>
    <property type="molecule type" value="Genomic_DNA"/>
</dbReference>
<dbReference type="RefSeq" id="WP_012364184.1">
    <property type="nucleotide sequence ID" value="NC_010551.1"/>
</dbReference>
<dbReference type="SMR" id="B1YSM8"/>
<dbReference type="KEGG" id="bac:BamMC406_1983"/>
<dbReference type="HOGENOM" id="CLU_013528_0_1_4"/>
<dbReference type="OrthoDB" id="9815130at2"/>
<dbReference type="Proteomes" id="UP000001680">
    <property type="component" value="Chromosome 1"/>
</dbReference>
<dbReference type="GO" id="GO:0005829">
    <property type="term" value="C:cytosol"/>
    <property type="evidence" value="ECO:0007669"/>
    <property type="project" value="TreeGrafter"/>
</dbReference>
<dbReference type="GO" id="GO:0005524">
    <property type="term" value="F:ATP binding"/>
    <property type="evidence" value="ECO:0007669"/>
    <property type="project" value="UniProtKB-UniRule"/>
</dbReference>
<dbReference type="GO" id="GO:0004817">
    <property type="term" value="F:cysteine-tRNA ligase activity"/>
    <property type="evidence" value="ECO:0007669"/>
    <property type="project" value="UniProtKB-UniRule"/>
</dbReference>
<dbReference type="GO" id="GO:0008270">
    <property type="term" value="F:zinc ion binding"/>
    <property type="evidence" value="ECO:0007669"/>
    <property type="project" value="UniProtKB-UniRule"/>
</dbReference>
<dbReference type="GO" id="GO:0006423">
    <property type="term" value="P:cysteinyl-tRNA aminoacylation"/>
    <property type="evidence" value="ECO:0007669"/>
    <property type="project" value="UniProtKB-UniRule"/>
</dbReference>
<dbReference type="CDD" id="cd07963">
    <property type="entry name" value="Anticodon_Ia_Cys"/>
    <property type="match status" value="1"/>
</dbReference>
<dbReference type="CDD" id="cd00672">
    <property type="entry name" value="CysRS_core"/>
    <property type="match status" value="1"/>
</dbReference>
<dbReference type="FunFam" id="3.40.50.620:FF:000009">
    <property type="entry name" value="Cysteine--tRNA ligase"/>
    <property type="match status" value="1"/>
</dbReference>
<dbReference type="Gene3D" id="1.20.120.1910">
    <property type="entry name" value="Cysteine-tRNA ligase, C-terminal anti-codon recognition domain"/>
    <property type="match status" value="1"/>
</dbReference>
<dbReference type="Gene3D" id="3.40.50.620">
    <property type="entry name" value="HUPs"/>
    <property type="match status" value="1"/>
</dbReference>
<dbReference type="HAMAP" id="MF_00041">
    <property type="entry name" value="Cys_tRNA_synth"/>
    <property type="match status" value="1"/>
</dbReference>
<dbReference type="InterPro" id="IPR015803">
    <property type="entry name" value="Cys-tRNA-ligase"/>
</dbReference>
<dbReference type="InterPro" id="IPR015273">
    <property type="entry name" value="Cys-tRNA-synt_Ia_DALR"/>
</dbReference>
<dbReference type="InterPro" id="IPR024909">
    <property type="entry name" value="Cys-tRNA/MSH_ligase"/>
</dbReference>
<dbReference type="InterPro" id="IPR014729">
    <property type="entry name" value="Rossmann-like_a/b/a_fold"/>
</dbReference>
<dbReference type="InterPro" id="IPR032678">
    <property type="entry name" value="tRNA-synt_1_cat_dom"/>
</dbReference>
<dbReference type="InterPro" id="IPR009080">
    <property type="entry name" value="tRNAsynth_Ia_anticodon-bd"/>
</dbReference>
<dbReference type="NCBIfam" id="TIGR00435">
    <property type="entry name" value="cysS"/>
    <property type="match status" value="1"/>
</dbReference>
<dbReference type="PANTHER" id="PTHR10890:SF3">
    <property type="entry name" value="CYSTEINE--TRNA LIGASE, CYTOPLASMIC"/>
    <property type="match status" value="1"/>
</dbReference>
<dbReference type="PANTHER" id="PTHR10890">
    <property type="entry name" value="CYSTEINYL-TRNA SYNTHETASE"/>
    <property type="match status" value="1"/>
</dbReference>
<dbReference type="Pfam" id="PF09190">
    <property type="entry name" value="DALR_2"/>
    <property type="match status" value="1"/>
</dbReference>
<dbReference type="Pfam" id="PF01406">
    <property type="entry name" value="tRNA-synt_1e"/>
    <property type="match status" value="1"/>
</dbReference>
<dbReference type="PRINTS" id="PR00983">
    <property type="entry name" value="TRNASYNTHCYS"/>
</dbReference>
<dbReference type="SMART" id="SM00840">
    <property type="entry name" value="DALR_2"/>
    <property type="match status" value="1"/>
</dbReference>
<dbReference type="SUPFAM" id="SSF47323">
    <property type="entry name" value="Anticodon-binding domain of a subclass of class I aminoacyl-tRNA synthetases"/>
    <property type="match status" value="1"/>
</dbReference>
<dbReference type="SUPFAM" id="SSF52374">
    <property type="entry name" value="Nucleotidylyl transferase"/>
    <property type="match status" value="1"/>
</dbReference>
<comment type="catalytic activity">
    <reaction evidence="1">
        <text>tRNA(Cys) + L-cysteine + ATP = L-cysteinyl-tRNA(Cys) + AMP + diphosphate</text>
        <dbReference type="Rhea" id="RHEA:17773"/>
        <dbReference type="Rhea" id="RHEA-COMP:9661"/>
        <dbReference type="Rhea" id="RHEA-COMP:9679"/>
        <dbReference type="ChEBI" id="CHEBI:30616"/>
        <dbReference type="ChEBI" id="CHEBI:33019"/>
        <dbReference type="ChEBI" id="CHEBI:35235"/>
        <dbReference type="ChEBI" id="CHEBI:78442"/>
        <dbReference type="ChEBI" id="CHEBI:78517"/>
        <dbReference type="ChEBI" id="CHEBI:456215"/>
        <dbReference type="EC" id="6.1.1.16"/>
    </reaction>
</comment>
<comment type="cofactor">
    <cofactor evidence="1">
        <name>Zn(2+)</name>
        <dbReference type="ChEBI" id="CHEBI:29105"/>
    </cofactor>
    <text evidence="1">Binds 1 zinc ion per subunit.</text>
</comment>
<comment type="subunit">
    <text evidence="1">Monomer.</text>
</comment>
<comment type="subcellular location">
    <subcellularLocation>
        <location evidence="1">Cytoplasm</location>
    </subcellularLocation>
</comment>
<comment type="similarity">
    <text evidence="1">Belongs to the class-I aminoacyl-tRNA synthetase family.</text>
</comment>
<sequence length="465" mass="52024">MESLRIYNTLARDKQVFVPRQSGEVRMYVCGITVYDYCHVGHARMLVVFDLVQRWLRAIGYRVTYVRNITDIDDKIIRRALENGETIKSLTDRFIGAMHEDEAALGIQRPDIEPRATQFIPQMLGMIEKLETNGYAYQAADGDVNYSVRKFANYGKLSGKSLDDLRAGERVAANDAKEDPLDFVLWKRAKADDPQGASWASKYGMGRPGWHIECSAMGCTLLGEHFDIHGGGQDLQFPHHENEIAQSEGATGQTFVNYWMHNGFVQVDNEKMSKSLGNFFTIREVLERYDAEVMRFFIVRTHYRSPLNYSDVHLDDARASLTRLYTALKDVQPDALALDWNEPHAQRFAAAMNDDINTPVAVATLFELAGEVNRTCDASLARQLKQLAGLLGLLGREPRAFLQQATGAAQAGGLAADEIEAKIAARVAAKQAKDYAEADRIRAELLDAGIALEDKPGGSTEWRRV</sequence>
<proteinExistence type="inferred from homology"/>
<organism>
    <name type="scientific">Burkholderia ambifaria (strain MC40-6)</name>
    <dbReference type="NCBI Taxonomy" id="398577"/>
    <lineage>
        <taxon>Bacteria</taxon>
        <taxon>Pseudomonadati</taxon>
        <taxon>Pseudomonadota</taxon>
        <taxon>Betaproteobacteria</taxon>
        <taxon>Burkholderiales</taxon>
        <taxon>Burkholderiaceae</taxon>
        <taxon>Burkholderia</taxon>
        <taxon>Burkholderia cepacia complex</taxon>
    </lineage>
</organism>
<name>SYC_BURA4</name>
<evidence type="ECO:0000255" key="1">
    <source>
        <dbReference type="HAMAP-Rule" id="MF_00041"/>
    </source>
</evidence>
<feature type="chain" id="PRO_1000090821" description="Cysteine--tRNA ligase">
    <location>
        <begin position="1"/>
        <end position="465"/>
    </location>
</feature>
<feature type="short sequence motif" description="'HIGH' region">
    <location>
        <begin position="32"/>
        <end position="42"/>
    </location>
</feature>
<feature type="short sequence motif" description="'KMSKS' region">
    <location>
        <begin position="271"/>
        <end position="275"/>
    </location>
</feature>
<feature type="binding site" evidence="1">
    <location>
        <position position="30"/>
    </location>
    <ligand>
        <name>Zn(2+)</name>
        <dbReference type="ChEBI" id="CHEBI:29105"/>
    </ligand>
</feature>
<feature type="binding site" evidence="1">
    <location>
        <position position="214"/>
    </location>
    <ligand>
        <name>Zn(2+)</name>
        <dbReference type="ChEBI" id="CHEBI:29105"/>
    </ligand>
</feature>
<feature type="binding site" evidence="1">
    <location>
        <position position="239"/>
    </location>
    <ligand>
        <name>Zn(2+)</name>
        <dbReference type="ChEBI" id="CHEBI:29105"/>
    </ligand>
</feature>
<feature type="binding site" evidence="1">
    <location>
        <position position="243"/>
    </location>
    <ligand>
        <name>Zn(2+)</name>
        <dbReference type="ChEBI" id="CHEBI:29105"/>
    </ligand>
</feature>
<feature type="binding site" evidence="1">
    <location>
        <position position="274"/>
    </location>
    <ligand>
        <name>ATP</name>
        <dbReference type="ChEBI" id="CHEBI:30616"/>
    </ligand>
</feature>